<keyword id="KW-0963">Cytoplasm</keyword>
<keyword id="KW-0489">Methyltransferase</keyword>
<keyword id="KW-0545">Nucleotide biosynthesis</keyword>
<keyword id="KW-1185">Reference proteome</keyword>
<keyword id="KW-0808">Transferase</keyword>
<protein>
    <recommendedName>
        <fullName evidence="1">Thymidylate synthase</fullName>
        <shortName evidence="1">TS</shortName>
        <shortName evidence="1">TSase</shortName>
        <ecNumber evidence="1">2.1.1.45</ecNumber>
    </recommendedName>
</protein>
<accession>Q0ABR1</accession>
<organism>
    <name type="scientific">Alkalilimnicola ehrlichii (strain ATCC BAA-1101 / DSM 17681 / MLHE-1)</name>
    <dbReference type="NCBI Taxonomy" id="187272"/>
    <lineage>
        <taxon>Bacteria</taxon>
        <taxon>Pseudomonadati</taxon>
        <taxon>Pseudomonadota</taxon>
        <taxon>Gammaproteobacteria</taxon>
        <taxon>Chromatiales</taxon>
        <taxon>Ectothiorhodospiraceae</taxon>
        <taxon>Alkalilimnicola</taxon>
    </lineage>
</organism>
<reference key="1">
    <citation type="submission" date="2006-08" db="EMBL/GenBank/DDBJ databases">
        <title>Complete sequence of Alkalilimnicola ehrilichei MLHE-1.</title>
        <authorList>
            <person name="Copeland A."/>
            <person name="Lucas S."/>
            <person name="Lapidus A."/>
            <person name="Barry K."/>
            <person name="Detter J.C."/>
            <person name="Glavina del Rio T."/>
            <person name="Hammon N."/>
            <person name="Israni S."/>
            <person name="Dalin E."/>
            <person name="Tice H."/>
            <person name="Pitluck S."/>
            <person name="Sims D."/>
            <person name="Brettin T."/>
            <person name="Bruce D."/>
            <person name="Han C."/>
            <person name="Tapia R."/>
            <person name="Gilna P."/>
            <person name="Schmutz J."/>
            <person name="Larimer F."/>
            <person name="Land M."/>
            <person name="Hauser L."/>
            <person name="Kyrpides N."/>
            <person name="Mikhailova N."/>
            <person name="Oremland R.S."/>
            <person name="Hoeft S.E."/>
            <person name="Switzer-Blum J."/>
            <person name="Kulp T."/>
            <person name="King G."/>
            <person name="Tabita R."/>
            <person name="Witte B."/>
            <person name="Santini J.M."/>
            <person name="Basu P."/>
            <person name="Hollibaugh J.T."/>
            <person name="Xie G."/>
            <person name="Stolz J.F."/>
            <person name="Richardson P."/>
        </authorList>
    </citation>
    <scope>NUCLEOTIDE SEQUENCE [LARGE SCALE GENOMIC DNA]</scope>
    <source>
        <strain>ATCC BAA-1101 / DSM 17681 / MLHE-1</strain>
    </source>
</reference>
<sequence>MQAYLDLMAHVRHHGTPKSDRTGTGTLSVFGHQMRFDLSRGFPVVTTKKLHLRSIIHELLWFLSGDSNIAYLKANGVSIWDEWADENGDLGPIYGVQWRSWPTPDGRRVDQLAQVLRDLREHPDSRRHLVSAWNVGELPNMALPPCHTLFQFYVAEGRLSCQLYQRSADIFLGLPFNIASYALLTHMVAQVCDLKPGEFIWTGGDCHLYTNHLEQADRQLQREPLPLPRLRLNPEVRDLFAFRYEDIALEGYQHHPPIKAPVAV</sequence>
<comment type="function">
    <text evidence="1">Catalyzes the reductive methylation of 2'-deoxyuridine-5'-monophosphate (dUMP) to 2'-deoxythymidine-5'-monophosphate (dTMP) while utilizing 5,10-methylenetetrahydrofolate (mTHF) as the methyl donor and reductant in the reaction, yielding dihydrofolate (DHF) as a by-product. This enzymatic reaction provides an intracellular de novo source of dTMP, an essential precursor for DNA biosynthesis.</text>
</comment>
<comment type="catalytic activity">
    <reaction evidence="1">
        <text>dUMP + (6R)-5,10-methylene-5,6,7,8-tetrahydrofolate = 7,8-dihydrofolate + dTMP</text>
        <dbReference type="Rhea" id="RHEA:12104"/>
        <dbReference type="ChEBI" id="CHEBI:15636"/>
        <dbReference type="ChEBI" id="CHEBI:57451"/>
        <dbReference type="ChEBI" id="CHEBI:63528"/>
        <dbReference type="ChEBI" id="CHEBI:246422"/>
        <dbReference type="EC" id="2.1.1.45"/>
    </reaction>
</comment>
<comment type="pathway">
    <text evidence="1">Pyrimidine metabolism; dTTP biosynthesis.</text>
</comment>
<comment type="subunit">
    <text evidence="1">Homodimer.</text>
</comment>
<comment type="subcellular location">
    <subcellularLocation>
        <location evidence="1">Cytoplasm</location>
    </subcellularLocation>
</comment>
<comment type="similarity">
    <text evidence="1">Belongs to the thymidylate synthase family. Bacterial-type ThyA subfamily.</text>
</comment>
<dbReference type="EC" id="2.1.1.45" evidence="1"/>
<dbReference type="EMBL" id="CP000453">
    <property type="protein sequence ID" value="ABI55726.1"/>
    <property type="molecule type" value="Genomic_DNA"/>
</dbReference>
<dbReference type="RefSeq" id="WP_011628122.1">
    <property type="nucleotide sequence ID" value="NC_008340.1"/>
</dbReference>
<dbReference type="SMR" id="Q0ABR1"/>
<dbReference type="KEGG" id="aeh:Mlg_0371"/>
<dbReference type="eggNOG" id="COG0207">
    <property type="taxonomic scope" value="Bacteria"/>
</dbReference>
<dbReference type="HOGENOM" id="CLU_021669_0_0_6"/>
<dbReference type="OrthoDB" id="9774633at2"/>
<dbReference type="UniPathway" id="UPA00575"/>
<dbReference type="Proteomes" id="UP000001962">
    <property type="component" value="Chromosome"/>
</dbReference>
<dbReference type="GO" id="GO:0005829">
    <property type="term" value="C:cytosol"/>
    <property type="evidence" value="ECO:0007669"/>
    <property type="project" value="TreeGrafter"/>
</dbReference>
<dbReference type="GO" id="GO:0004799">
    <property type="term" value="F:thymidylate synthase activity"/>
    <property type="evidence" value="ECO:0007669"/>
    <property type="project" value="UniProtKB-UniRule"/>
</dbReference>
<dbReference type="GO" id="GO:0006231">
    <property type="term" value="P:dTMP biosynthetic process"/>
    <property type="evidence" value="ECO:0007669"/>
    <property type="project" value="UniProtKB-UniRule"/>
</dbReference>
<dbReference type="GO" id="GO:0006235">
    <property type="term" value="P:dTTP biosynthetic process"/>
    <property type="evidence" value="ECO:0007669"/>
    <property type="project" value="UniProtKB-UniRule"/>
</dbReference>
<dbReference type="GO" id="GO:0032259">
    <property type="term" value="P:methylation"/>
    <property type="evidence" value="ECO:0007669"/>
    <property type="project" value="UniProtKB-KW"/>
</dbReference>
<dbReference type="CDD" id="cd00351">
    <property type="entry name" value="TS_Pyrimidine_HMase"/>
    <property type="match status" value="1"/>
</dbReference>
<dbReference type="FunFam" id="3.30.572.10:FF:000001">
    <property type="entry name" value="Thymidylate synthase"/>
    <property type="match status" value="1"/>
</dbReference>
<dbReference type="Gene3D" id="3.30.572.10">
    <property type="entry name" value="Thymidylate synthase/dCMP hydroxymethylase domain"/>
    <property type="match status" value="1"/>
</dbReference>
<dbReference type="HAMAP" id="MF_00008">
    <property type="entry name" value="Thymidy_synth_bact"/>
    <property type="match status" value="1"/>
</dbReference>
<dbReference type="InterPro" id="IPR045097">
    <property type="entry name" value="Thymidate_synth/dCMP_Mease"/>
</dbReference>
<dbReference type="InterPro" id="IPR023451">
    <property type="entry name" value="Thymidate_synth/dCMP_Mease_dom"/>
</dbReference>
<dbReference type="InterPro" id="IPR036926">
    <property type="entry name" value="Thymidate_synth/dCMP_Mease_sf"/>
</dbReference>
<dbReference type="InterPro" id="IPR000398">
    <property type="entry name" value="Thymidylate_synthase"/>
</dbReference>
<dbReference type="InterPro" id="IPR020940">
    <property type="entry name" value="Thymidylate_synthase_AS"/>
</dbReference>
<dbReference type="NCBIfam" id="NF002497">
    <property type="entry name" value="PRK01827.1-3"/>
    <property type="match status" value="1"/>
</dbReference>
<dbReference type="NCBIfam" id="NF002499">
    <property type="entry name" value="PRK01827.1-5"/>
    <property type="match status" value="1"/>
</dbReference>
<dbReference type="NCBIfam" id="TIGR03284">
    <property type="entry name" value="thym_sym"/>
    <property type="match status" value="2"/>
</dbReference>
<dbReference type="PANTHER" id="PTHR11548:SF9">
    <property type="entry name" value="THYMIDYLATE SYNTHASE"/>
    <property type="match status" value="1"/>
</dbReference>
<dbReference type="PANTHER" id="PTHR11548">
    <property type="entry name" value="THYMIDYLATE SYNTHASE 1"/>
    <property type="match status" value="1"/>
</dbReference>
<dbReference type="Pfam" id="PF00303">
    <property type="entry name" value="Thymidylat_synt"/>
    <property type="match status" value="1"/>
</dbReference>
<dbReference type="PRINTS" id="PR00108">
    <property type="entry name" value="THYMDSNTHASE"/>
</dbReference>
<dbReference type="SUPFAM" id="SSF55831">
    <property type="entry name" value="Thymidylate synthase/dCMP hydroxymethylase"/>
    <property type="match status" value="1"/>
</dbReference>
<dbReference type="PROSITE" id="PS00091">
    <property type="entry name" value="THYMIDYLATE_SYNTHASE"/>
    <property type="match status" value="1"/>
</dbReference>
<gene>
    <name evidence="1" type="primary">thyA</name>
    <name type="ordered locus">Mlg_0371</name>
</gene>
<feature type="chain" id="PRO_1000000572" description="Thymidylate synthase">
    <location>
        <begin position="1"/>
        <end position="264"/>
    </location>
</feature>
<feature type="active site" description="Nucleophile" evidence="1">
    <location>
        <position position="146"/>
    </location>
</feature>
<feature type="binding site" description="in other chain" evidence="1">
    <location>
        <position position="21"/>
    </location>
    <ligand>
        <name>dUMP</name>
        <dbReference type="ChEBI" id="CHEBI:246422"/>
        <note>ligand shared between dimeric partners</note>
    </ligand>
</feature>
<feature type="binding site" evidence="1">
    <location>
        <position position="51"/>
    </location>
    <ligand>
        <name>(6R)-5,10-methylene-5,6,7,8-tetrahydrofolate</name>
        <dbReference type="ChEBI" id="CHEBI:15636"/>
    </ligand>
</feature>
<feature type="binding site" evidence="1">
    <location>
        <begin position="126"/>
        <end position="127"/>
    </location>
    <ligand>
        <name>dUMP</name>
        <dbReference type="ChEBI" id="CHEBI:246422"/>
        <note>ligand shared between dimeric partners</note>
    </ligand>
</feature>
<feature type="binding site" description="in other chain" evidence="1">
    <location>
        <begin position="166"/>
        <end position="169"/>
    </location>
    <ligand>
        <name>dUMP</name>
        <dbReference type="ChEBI" id="CHEBI:246422"/>
        <note>ligand shared between dimeric partners</note>
    </ligand>
</feature>
<feature type="binding site" evidence="1">
    <location>
        <position position="169"/>
    </location>
    <ligand>
        <name>(6R)-5,10-methylene-5,6,7,8-tetrahydrofolate</name>
        <dbReference type="ChEBI" id="CHEBI:15636"/>
    </ligand>
</feature>
<feature type="binding site" description="in other chain" evidence="1">
    <location>
        <position position="177"/>
    </location>
    <ligand>
        <name>dUMP</name>
        <dbReference type="ChEBI" id="CHEBI:246422"/>
        <note>ligand shared between dimeric partners</note>
    </ligand>
</feature>
<feature type="binding site" description="in other chain" evidence="1">
    <location>
        <begin position="207"/>
        <end position="209"/>
    </location>
    <ligand>
        <name>dUMP</name>
        <dbReference type="ChEBI" id="CHEBI:246422"/>
        <note>ligand shared between dimeric partners</note>
    </ligand>
</feature>
<feature type="binding site" evidence="1">
    <location>
        <position position="263"/>
    </location>
    <ligand>
        <name>(6R)-5,10-methylene-5,6,7,8-tetrahydrofolate</name>
        <dbReference type="ChEBI" id="CHEBI:15636"/>
    </ligand>
</feature>
<proteinExistence type="inferred from homology"/>
<name>TYSY_ALKEH</name>
<evidence type="ECO:0000255" key="1">
    <source>
        <dbReference type="HAMAP-Rule" id="MF_00008"/>
    </source>
</evidence>